<evidence type="ECO:0000255" key="1">
    <source>
        <dbReference type="HAMAP-Rule" id="MF_00634"/>
    </source>
</evidence>
<evidence type="ECO:0000305" key="2"/>
<protein>
    <recommendedName>
        <fullName evidence="1">UPF0235 protein VV2877</fullName>
    </recommendedName>
</protein>
<name>Y2877_VIBVY</name>
<gene>
    <name type="ordered locus">VV2877</name>
</gene>
<accession>Q7MHJ2</accession>
<sequence length="96" mass="10650">MNPAVWLDGEDVVLRLYIQPKASRDKILGLHGDELKIAITAPPVDGKANGHLTKLLGKWFKVAKSLVTIEKGELGRHKQVRVHTPQQIPDEVKAIL</sequence>
<reference key="1">
    <citation type="journal article" date="2003" name="Genome Res.">
        <title>Comparative genome analysis of Vibrio vulnificus, a marine pathogen.</title>
        <authorList>
            <person name="Chen C.-Y."/>
            <person name="Wu K.-M."/>
            <person name="Chang Y.-C."/>
            <person name="Chang C.-H."/>
            <person name="Tsai H.-C."/>
            <person name="Liao T.-L."/>
            <person name="Liu Y.-M."/>
            <person name="Chen H.-J."/>
            <person name="Shen A.B.-T."/>
            <person name="Li J.-C."/>
            <person name="Su T.-L."/>
            <person name="Shao C.-P."/>
            <person name="Lee C.-T."/>
            <person name="Hor L.-I."/>
            <person name="Tsai S.-F."/>
        </authorList>
    </citation>
    <scope>NUCLEOTIDE SEQUENCE [LARGE SCALE GENOMIC DNA]</scope>
    <source>
        <strain>YJ016</strain>
    </source>
</reference>
<organism>
    <name type="scientific">Vibrio vulnificus (strain YJ016)</name>
    <dbReference type="NCBI Taxonomy" id="196600"/>
    <lineage>
        <taxon>Bacteria</taxon>
        <taxon>Pseudomonadati</taxon>
        <taxon>Pseudomonadota</taxon>
        <taxon>Gammaproteobacteria</taxon>
        <taxon>Vibrionales</taxon>
        <taxon>Vibrionaceae</taxon>
        <taxon>Vibrio</taxon>
    </lineage>
</organism>
<feature type="chain" id="PRO_0000139463" description="UPF0235 protein VV2877">
    <location>
        <begin position="1"/>
        <end position="96"/>
    </location>
</feature>
<proteinExistence type="inferred from homology"/>
<comment type="similarity">
    <text evidence="1">Belongs to the UPF0235 family.</text>
</comment>
<comment type="sequence caution" evidence="2">
    <conflict type="erroneous initiation">
        <sequence resource="EMBL-CDS" id="BAC95641"/>
    </conflict>
</comment>
<dbReference type="EMBL" id="BA000037">
    <property type="protein sequence ID" value="BAC95641.1"/>
    <property type="status" value="ALT_INIT"/>
    <property type="molecule type" value="Genomic_DNA"/>
</dbReference>
<dbReference type="SMR" id="Q7MHJ2"/>
<dbReference type="STRING" id="672.VV93_v1c25830"/>
<dbReference type="KEGG" id="vvy:VV2877"/>
<dbReference type="eggNOG" id="COG1872">
    <property type="taxonomic scope" value="Bacteria"/>
</dbReference>
<dbReference type="HOGENOM" id="CLU_130694_5_0_6"/>
<dbReference type="Proteomes" id="UP000002675">
    <property type="component" value="Chromosome I"/>
</dbReference>
<dbReference type="GO" id="GO:0005737">
    <property type="term" value="C:cytoplasm"/>
    <property type="evidence" value="ECO:0007669"/>
    <property type="project" value="TreeGrafter"/>
</dbReference>
<dbReference type="Gene3D" id="3.30.1200.10">
    <property type="entry name" value="YggU-like"/>
    <property type="match status" value="1"/>
</dbReference>
<dbReference type="HAMAP" id="MF_00634">
    <property type="entry name" value="UPF0235"/>
    <property type="match status" value="1"/>
</dbReference>
<dbReference type="InterPro" id="IPR003746">
    <property type="entry name" value="DUF167"/>
</dbReference>
<dbReference type="InterPro" id="IPR036591">
    <property type="entry name" value="YggU-like_sf"/>
</dbReference>
<dbReference type="NCBIfam" id="TIGR00251">
    <property type="entry name" value="DUF167 family protein"/>
    <property type="match status" value="1"/>
</dbReference>
<dbReference type="NCBIfam" id="NF003466">
    <property type="entry name" value="PRK05090.1"/>
    <property type="match status" value="1"/>
</dbReference>
<dbReference type="PANTHER" id="PTHR13420">
    <property type="entry name" value="UPF0235 PROTEIN C15ORF40"/>
    <property type="match status" value="1"/>
</dbReference>
<dbReference type="PANTHER" id="PTHR13420:SF7">
    <property type="entry name" value="UPF0235 PROTEIN C15ORF40"/>
    <property type="match status" value="1"/>
</dbReference>
<dbReference type="Pfam" id="PF02594">
    <property type="entry name" value="DUF167"/>
    <property type="match status" value="1"/>
</dbReference>
<dbReference type="SMART" id="SM01152">
    <property type="entry name" value="DUF167"/>
    <property type="match status" value="1"/>
</dbReference>
<dbReference type="SUPFAM" id="SSF69786">
    <property type="entry name" value="YggU-like"/>
    <property type="match status" value="1"/>
</dbReference>